<name>ABAA_ASPOR</name>
<evidence type="ECO:0000250" key="1">
    <source>
        <dbReference type="UniProtKB" id="I1S4T3"/>
    </source>
</evidence>
<evidence type="ECO:0000250" key="2">
    <source>
        <dbReference type="UniProtKB" id="P20945"/>
    </source>
</evidence>
<evidence type="ECO:0000255" key="3">
    <source>
        <dbReference type="PROSITE-ProRule" id="PRU00505"/>
    </source>
</evidence>
<evidence type="ECO:0000256" key="4">
    <source>
        <dbReference type="SAM" id="MobiDB-lite"/>
    </source>
</evidence>
<evidence type="ECO:0000269" key="5">
    <source>
    </source>
</evidence>
<evidence type="ECO:0000303" key="6">
    <source ref="1"/>
</evidence>
<evidence type="ECO:0000305" key="7"/>
<evidence type="ECO:0000312" key="8">
    <source>
        <dbReference type="EMBL" id="BAH47541.1"/>
    </source>
</evidence>
<sequence length="785" mass="88240">MAEWQTECMLPPTQPGFEGVGPHPGRVLQNTSGNIQSYSDTLAHTDPTGRDDHFSHYGFKYPHQPPVPTHPMPTTTGLHPQQVINNRFHTKKLRRLQSLGPNLIGPRRTRSYLKSQKYIEYRARPRRDTGKDGEPVWSDELEDAFQQALEANPPMGRRKWSERGKSYGRNELIAEYIYKTTGKRRSRKQVSSHLQVLDSFLKGDPDWERLVREQPADRSNGQPPSAGPRWRNSLELPFSSHYNSHNYPSYHDSLRPVQSYSGELPPPHVVFHPNLHAEATNINKIYGLSFDMWVSAPNQPGGIESAFHLYTRLQGDQRHPAPPKRLENIPNWRTSFPHLNSVMADVNNPLNCDIILLEANLRLMDDFPPSGSKLGIQLELDFTQPPNGDALTNQMENWSCSTYIYEEGQNIYRARQDLPKQQSNKVKPPFESTWWAKRFTELTEIAKDRQLNELADRQTRDYFRTLTAVQEIRATPSSRRVSNQYPDNSQDDSKRMAILLWQFRQTRSNEVGTTTWRRVTSPSSDRNTIPSPKPVTGIDLPPLSFYANSLARPAPSIYQAPQSHDLVHHNGTSQPQWSMYQPPQDSIFNANGGFDLLNSITKPEGGLHDKTAVTSVLDTYPNLQPEVSQPTSLNGSNGGPGMLSIPDMSLSHTNLNAYNLSGHDNHYGTPQHPGVSVPDNSHVLNNGIFGSSTQSIDDMSQTHAPWPTPTSSITDVGSSNYSHLQFSDHHVPSVSRESHQPNHFEVLLGPDDLIVGSMPGDPGINGAAHGHMNHTYTENNAVEAA</sequence>
<protein>
    <recommendedName>
        <fullName evidence="7">Conidiophore development regulator abaA</fullName>
    </recommendedName>
</protein>
<proteinExistence type="evidence at transcript level"/>
<organism evidence="8">
    <name type="scientific">Aspergillus oryzae (strain ATCC 42149 / RIB 40)</name>
    <name type="common">Yellow koji mold</name>
    <dbReference type="NCBI Taxonomy" id="510516"/>
    <lineage>
        <taxon>Eukaryota</taxon>
        <taxon>Fungi</taxon>
        <taxon>Dikarya</taxon>
        <taxon>Ascomycota</taxon>
        <taxon>Pezizomycotina</taxon>
        <taxon>Eurotiomycetes</taxon>
        <taxon>Eurotiomycetidae</taxon>
        <taxon>Eurotiales</taxon>
        <taxon>Aspergillaceae</taxon>
        <taxon>Aspergillus</taxon>
        <taxon>Aspergillus subgen. Circumdati</taxon>
    </lineage>
</organism>
<dbReference type="EMBL" id="AB185919">
    <property type="protein sequence ID" value="BAD89080.1"/>
    <property type="molecule type" value="Genomic_DNA"/>
</dbReference>
<dbReference type="EMBL" id="AB455550">
    <property type="protein sequence ID" value="BAH47541.1"/>
    <property type="molecule type" value="mRNA"/>
</dbReference>
<dbReference type="EMBL" id="BA000050">
    <property type="protein sequence ID" value="BAE57983.1"/>
    <property type="status" value="ALT_SEQ"/>
    <property type="molecule type" value="Genomic_DNA"/>
</dbReference>
<dbReference type="EMBL" id="BA000050">
    <property type="protein sequence ID" value="BAE57984.1"/>
    <property type="status" value="ALT_SEQ"/>
    <property type="molecule type" value="Genomic_DNA"/>
</dbReference>
<dbReference type="RefSeq" id="XP_001819986.2">
    <property type="nucleotide sequence ID" value="XM_001819934.2"/>
</dbReference>
<dbReference type="SMR" id="C0STD9"/>
<dbReference type="STRING" id="510516.C0STD9"/>
<dbReference type="EnsemblFungi" id="BAE57984">
    <property type="protein sequence ID" value="BAE57984"/>
    <property type="gene ID" value="AO090003000857"/>
</dbReference>
<dbReference type="VEuPathDB" id="FungiDB:AO090003001587"/>
<dbReference type="OMA" id="MWVSAPQ"/>
<dbReference type="Proteomes" id="UP000006564">
    <property type="component" value="Chromosome 2"/>
</dbReference>
<dbReference type="GO" id="GO:0005634">
    <property type="term" value="C:nucleus"/>
    <property type="evidence" value="ECO:0007669"/>
    <property type="project" value="UniProtKB-SubCell"/>
</dbReference>
<dbReference type="GO" id="GO:0005667">
    <property type="term" value="C:transcription regulator complex"/>
    <property type="evidence" value="ECO:0007669"/>
    <property type="project" value="TreeGrafter"/>
</dbReference>
<dbReference type="GO" id="GO:0000981">
    <property type="term" value="F:DNA-binding transcription factor activity, RNA polymerase II-specific"/>
    <property type="evidence" value="ECO:0007669"/>
    <property type="project" value="TreeGrafter"/>
</dbReference>
<dbReference type="GO" id="GO:0000978">
    <property type="term" value="F:RNA polymerase II cis-regulatory region sequence-specific DNA binding"/>
    <property type="evidence" value="ECO:0007669"/>
    <property type="project" value="TreeGrafter"/>
</dbReference>
<dbReference type="GO" id="GO:0048315">
    <property type="term" value="P:conidium formation"/>
    <property type="evidence" value="ECO:0007669"/>
    <property type="project" value="UniProtKB-KW"/>
</dbReference>
<dbReference type="GO" id="GO:0030435">
    <property type="term" value="P:sporulation resulting in formation of a cellular spore"/>
    <property type="evidence" value="ECO:0007669"/>
    <property type="project" value="UniProtKB-KW"/>
</dbReference>
<dbReference type="Gene3D" id="6.10.20.40">
    <property type="entry name" value="TEA/ATTS domain"/>
    <property type="match status" value="1"/>
</dbReference>
<dbReference type="InterPro" id="IPR000818">
    <property type="entry name" value="TEA/ATTS_dom"/>
</dbReference>
<dbReference type="InterPro" id="IPR038096">
    <property type="entry name" value="TEA/ATTS_sf"/>
</dbReference>
<dbReference type="InterPro" id="IPR050937">
    <property type="entry name" value="TEC1_TEAD_TF"/>
</dbReference>
<dbReference type="PANTHER" id="PTHR11834:SF0">
    <property type="entry name" value="PROTEIN SCALLOPED"/>
    <property type="match status" value="1"/>
</dbReference>
<dbReference type="PANTHER" id="PTHR11834">
    <property type="entry name" value="TRANSCRIPTIONAL ENHANCER FACTOR TEF RELATED"/>
    <property type="match status" value="1"/>
</dbReference>
<dbReference type="Pfam" id="PF01285">
    <property type="entry name" value="TEA"/>
    <property type="match status" value="1"/>
</dbReference>
<dbReference type="PRINTS" id="PR00065">
    <property type="entry name" value="TEADOMAIN"/>
</dbReference>
<dbReference type="SMART" id="SM00426">
    <property type="entry name" value="TEA"/>
    <property type="match status" value="1"/>
</dbReference>
<dbReference type="PROSITE" id="PS51088">
    <property type="entry name" value="TEA_2"/>
    <property type="match status" value="1"/>
</dbReference>
<comment type="function">
    <text evidence="2 5">BrlA, abaA and wetA are pivotal regulators of conidiophore development and conidium maturation (PubMed:19850144). They act individually and together to regulate their own expression and that of numerous other sporulation-specific genes (By similarity). Binds to the sequence 5'-CATTCY-3', where Y is a pyrimidine, making both major- and minor-groove contacts (By similarity). Controls expression of wetA (PubMed:19850144).</text>
</comment>
<comment type="subcellular location">
    <subcellularLocation>
        <location evidence="1">Nucleus</location>
    </subcellularLocation>
    <text evidence="1">localizes to the nuclei of phialides and terminal cells of mature conidia (By similarity).</text>
</comment>
<comment type="induction">
    <text evidence="5">Expression is controlled by brlA (PubMed:19850144).</text>
</comment>
<comment type="disruption phenotype">
    <text evidence="5">Forms aberrant phialides (PubMed:19850144).</text>
</comment>
<comment type="similarity">
    <text evidence="7">Belongs to the TEC1 family.</text>
</comment>
<comment type="sequence caution" evidence="7">
    <conflict type="erroneous gene model prediction">
        <sequence resource="EMBL-CDS" id="BAE57983"/>
    </conflict>
    <text>The predicted 2 genes AO090003000856 and AO090003000857 have been merged.</text>
</comment>
<comment type="sequence caution" evidence="7">
    <conflict type="erroneous gene model prediction">
        <sequence resource="EMBL-CDS" id="BAE57984"/>
    </conflict>
    <text>The predicted 2 genes AO090003000856 and AO090003000857 have been merged.</text>
</comment>
<reference key="1">
    <citation type="submission" date="2004-07" db="EMBL/GenBank/DDBJ databases">
        <title>Cloning and Functional Analysis of ATTS/TEA Transcription Factors, abaA and abaB, from Aspergillus oryzae.</title>
        <authorList>
            <person name="Yamada O."/>
            <person name="Sakamoto K."/>
            <person name="Tominaga M."/>
            <person name="Akita O."/>
        </authorList>
    </citation>
    <scope>NUCLEOTIDE SEQUENCE [GENOMIC DNA]</scope>
    <source>
        <strain>ATCC 42149 / RIB 40</strain>
    </source>
</reference>
<reference key="2">
    <citation type="journal article" date="2010" name="Fungal Genet. Biol.">
        <title>Genetic analysis of conidiation regulatory pathways in koji-mold Aspergillus oryzae.</title>
        <authorList>
            <person name="Ogawa M."/>
            <person name="Tokuoka M."/>
            <person name="Jin F.J."/>
            <person name="Takahashi T."/>
            <person name="Koyama Y."/>
        </authorList>
    </citation>
    <scope>NUCLEOTIDE SEQUENCE [MRNA]</scope>
    <scope>FUNCTION</scope>
    <scope>DISRUPTION PHENOTYPE</scope>
    <scope>INDUCTION</scope>
    <source>
        <strain>ATCC 42149 / RIB 40</strain>
    </source>
</reference>
<reference key="3">
    <citation type="journal article" date="2005" name="Nature">
        <title>Genome sequencing and analysis of Aspergillus oryzae.</title>
        <authorList>
            <person name="Machida M."/>
            <person name="Asai K."/>
            <person name="Sano M."/>
            <person name="Tanaka T."/>
            <person name="Kumagai T."/>
            <person name="Terai G."/>
            <person name="Kusumoto K."/>
            <person name="Arima T."/>
            <person name="Akita O."/>
            <person name="Kashiwagi Y."/>
            <person name="Abe K."/>
            <person name="Gomi K."/>
            <person name="Horiuchi H."/>
            <person name="Kitamoto K."/>
            <person name="Kobayashi T."/>
            <person name="Takeuchi M."/>
            <person name="Denning D.W."/>
            <person name="Galagan J.E."/>
            <person name="Nierman W.C."/>
            <person name="Yu J."/>
            <person name="Archer D.B."/>
            <person name="Bennett J.W."/>
            <person name="Bhatnagar D."/>
            <person name="Cleveland T.E."/>
            <person name="Fedorova N.D."/>
            <person name="Gotoh O."/>
            <person name="Horikawa H."/>
            <person name="Hosoyama A."/>
            <person name="Ichinomiya M."/>
            <person name="Igarashi R."/>
            <person name="Iwashita K."/>
            <person name="Juvvadi P.R."/>
            <person name="Kato M."/>
            <person name="Kato Y."/>
            <person name="Kin T."/>
            <person name="Kokubun A."/>
            <person name="Maeda H."/>
            <person name="Maeyama N."/>
            <person name="Maruyama J."/>
            <person name="Nagasaki H."/>
            <person name="Nakajima T."/>
            <person name="Oda K."/>
            <person name="Okada K."/>
            <person name="Paulsen I."/>
            <person name="Sakamoto K."/>
            <person name="Sawano T."/>
            <person name="Takahashi M."/>
            <person name="Takase K."/>
            <person name="Terabayashi Y."/>
            <person name="Wortman J.R."/>
            <person name="Yamada O."/>
            <person name="Yamagata Y."/>
            <person name="Anazawa H."/>
            <person name="Hata Y."/>
            <person name="Koide Y."/>
            <person name="Komori T."/>
            <person name="Koyama Y."/>
            <person name="Minetoki T."/>
            <person name="Suharnan S."/>
            <person name="Tanaka A."/>
            <person name="Isono K."/>
            <person name="Kuhara S."/>
            <person name="Ogasawara N."/>
            <person name="Kikuchi H."/>
        </authorList>
    </citation>
    <scope>NUCLEOTIDE SEQUENCE [LARGE SCALE GENOMIC DNA]</scope>
    <source>
        <strain>ATCC 42149 / RIB 40</strain>
    </source>
</reference>
<keyword id="KW-0010">Activator</keyword>
<keyword id="KW-0183">Conidiation</keyword>
<keyword id="KW-0539">Nucleus</keyword>
<keyword id="KW-1185">Reference proteome</keyword>
<keyword id="KW-0749">Sporulation</keyword>
<keyword id="KW-0804">Transcription</keyword>
<keyword id="KW-0805">Transcription regulation</keyword>
<gene>
    <name evidence="6" type="primary">abaA</name>
    <name type="ORF">AO090003000856</name>
    <name type="ORF">AO090003000857</name>
</gene>
<accession>C0STD9</accession>
<accession>Q2UKD1</accession>
<accession>Q2UKD2</accession>
<accession>Q5H7P4</accession>
<feature type="chain" id="PRO_0000435934" description="Conidiophore development regulator abaA">
    <location>
        <begin position="1"/>
        <end position="785"/>
    </location>
</feature>
<feature type="DNA-binding region" description="TEA" evidence="3">
    <location>
        <begin position="130"/>
        <end position="204"/>
    </location>
</feature>
<feature type="region of interest" description="Disordered" evidence="4">
    <location>
        <begin position="1"/>
        <end position="22"/>
    </location>
</feature>
<feature type="region of interest" description="Disordered" evidence="4">
    <location>
        <begin position="213"/>
        <end position="232"/>
    </location>
</feature>